<dbReference type="EC" id="4.6.1.19" evidence="5"/>
<dbReference type="EMBL" id="X79338">
    <property type="protein sequence ID" value="CAA55896.1"/>
    <property type="molecule type" value="mRNA"/>
</dbReference>
<dbReference type="PIR" id="S53507">
    <property type="entry name" value="S53507"/>
</dbReference>
<dbReference type="RefSeq" id="NP_001234551.2">
    <property type="nucleotide sequence ID" value="NM_001247622.2"/>
</dbReference>
<dbReference type="SMR" id="P80196"/>
<dbReference type="STRING" id="4081.P80196"/>
<dbReference type="PaxDb" id="4081-Solyc05g007940.2.1"/>
<dbReference type="GeneID" id="544193"/>
<dbReference type="KEGG" id="sly:544193"/>
<dbReference type="eggNOG" id="KOG1642">
    <property type="taxonomic scope" value="Eukaryota"/>
</dbReference>
<dbReference type="InParanoid" id="P80196"/>
<dbReference type="OrthoDB" id="435754at2759"/>
<dbReference type="BRENDA" id="4.6.1.19">
    <property type="organism ID" value="3101"/>
</dbReference>
<dbReference type="Proteomes" id="UP000004994">
    <property type="component" value="Unplaced"/>
</dbReference>
<dbReference type="ExpressionAtlas" id="P80196">
    <property type="expression patterns" value="baseline and differential"/>
</dbReference>
<dbReference type="GO" id="GO:0005737">
    <property type="term" value="C:cytoplasm"/>
    <property type="evidence" value="ECO:0007669"/>
    <property type="project" value="UniProtKB-SubCell"/>
</dbReference>
<dbReference type="GO" id="GO:0005576">
    <property type="term" value="C:extracellular region"/>
    <property type="evidence" value="ECO:0000318"/>
    <property type="project" value="GO_Central"/>
</dbReference>
<dbReference type="GO" id="GO:0033897">
    <property type="term" value="F:ribonuclease T2 activity"/>
    <property type="evidence" value="ECO:0007669"/>
    <property type="project" value="UniProtKB-EC"/>
</dbReference>
<dbReference type="GO" id="GO:0003723">
    <property type="term" value="F:RNA binding"/>
    <property type="evidence" value="ECO:0007669"/>
    <property type="project" value="InterPro"/>
</dbReference>
<dbReference type="GO" id="GO:0004521">
    <property type="term" value="F:RNA endonuclease activity"/>
    <property type="evidence" value="ECO:0000318"/>
    <property type="project" value="GO_Central"/>
</dbReference>
<dbReference type="GO" id="GO:0006401">
    <property type="term" value="P:RNA catabolic process"/>
    <property type="evidence" value="ECO:0000318"/>
    <property type="project" value="GO_Central"/>
</dbReference>
<dbReference type="CDD" id="cd01061">
    <property type="entry name" value="RNase_T2_euk"/>
    <property type="match status" value="1"/>
</dbReference>
<dbReference type="FunFam" id="3.90.730.10:FF:000003">
    <property type="entry name" value="Ribonuclease 3"/>
    <property type="match status" value="1"/>
</dbReference>
<dbReference type="Gene3D" id="3.90.730.10">
    <property type="entry name" value="Ribonuclease T2-like"/>
    <property type="match status" value="1"/>
</dbReference>
<dbReference type="InterPro" id="IPR033697">
    <property type="entry name" value="Ribonuclease_T2_eukaryotic"/>
</dbReference>
<dbReference type="InterPro" id="IPR001568">
    <property type="entry name" value="RNase_T2-like"/>
</dbReference>
<dbReference type="InterPro" id="IPR036430">
    <property type="entry name" value="RNase_T2-like_sf"/>
</dbReference>
<dbReference type="InterPro" id="IPR018188">
    <property type="entry name" value="RNase_T2_His_AS_1"/>
</dbReference>
<dbReference type="InterPro" id="IPR033130">
    <property type="entry name" value="RNase_T2_His_AS_2"/>
</dbReference>
<dbReference type="PANTHER" id="PTHR11240:SF75">
    <property type="entry name" value="RIBONUCLEASE 3"/>
    <property type="match status" value="1"/>
</dbReference>
<dbReference type="PANTHER" id="PTHR11240">
    <property type="entry name" value="RIBONUCLEASE T2"/>
    <property type="match status" value="1"/>
</dbReference>
<dbReference type="Pfam" id="PF00445">
    <property type="entry name" value="Ribonuclease_T2"/>
    <property type="match status" value="1"/>
</dbReference>
<dbReference type="SUPFAM" id="SSF55895">
    <property type="entry name" value="Ribonuclease Rh-like"/>
    <property type="match status" value="1"/>
</dbReference>
<dbReference type="PROSITE" id="PS00530">
    <property type="entry name" value="RNASE_T2_1"/>
    <property type="match status" value="1"/>
</dbReference>
<dbReference type="PROSITE" id="PS00531">
    <property type="entry name" value="RNASE_T2_2"/>
    <property type="match status" value="1"/>
</dbReference>
<accession>P80196</accession>
<name>RNLX_SOLLC</name>
<keyword id="KW-0963">Cytoplasm</keyword>
<keyword id="KW-0903">Direct protein sequencing</keyword>
<keyword id="KW-1015">Disulfide bond</keyword>
<keyword id="KW-0255">Endonuclease</keyword>
<keyword id="KW-0378">Hydrolase</keyword>
<keyword id="KW-0456">Lyase</keyword>
<keyword id="KW-0540">Nuclease</keyword>
<keyword id="KW-1185">Reference proteome</keyword>
<keyword id="KW-0346">Stress response</keyword>
<keyword id="KW-0865">Zymogen</keyword>
<sequence>MMKSQKKLLIKIIVVQCLLVLCVTSQDFDFFYFVQQWPASYCDTRRSCCYPTTGKPDEDFSIHGLWPNYKDGKWPQNCDRESSLDESEFSDLISTMEKNWPSLACPSSDGLKFWSHEWLKHGTCSALNQHAYFQTALDFKTKSNLLQNLNNAGIKPRNGDYYGVESIKKAIEKGVGHTPFIECNVDSQGNHQLYQVYLCVDSSASKFIDCPIFPHGGKCGSKIEFPSFSTNDDHDEF</sequence>
<organism>
    <name type="scientific">Solanum lycopersicum</name>
    <name type="common">Tomato</name>
    <name type="synonym">Lycopersicon esculentum</name>
    <dbReference type="NCBI Taxonomy" id="4081"/>
    <lineage>
        <taxon>Eukaryota</taxon>
        <taxon>Viridiplantae</taxon>
        <taxon>Streptophyta</taxon>
        <taxon>Embryophyta</taxon>
        <taxon>Tracheophyta</taxon>
        <taxon>Spermatophyta</taxon>
        <taxon>Magnoliopsida</taxon>
        <taxon>eudicotyledons</taxon>
        <taxon>Gunneridae</taxon>
        <taxon>Pentapetalae</taxon>
        <taxon>asterids</taxon>
        <taxon>lamiids</taxon>
        <taxon>Solanales</taxon>
        <taxon>Solanaceae</taxon>
        <taxon>Solanoideae</taxon>
        <taxon>Solaneae</taxon>
        <taxon>Solanum</taxon>
        <taxon>Solanum subgen. Lycopersicon</taxon>
    </lineage>
</organism>
<proteinExistence type="evidence at protein level"/>
<gene>
    <name type="primary">RNALX</name>
</gene>
<comment type="catalytic activity">
    <reaction evidence="4 5">
        <text>a ribonucleotidyl-ribonucleotide-RNA + H2O = a 3'-end 3'-phospho-ribonucleotide-RNA + a 5'-end dephospho-ribonucleoside-RNA + H(+)</text>
        <dbReference type="Rhea" id="RHEA:68052"/>
        <dbReference type="Rhea" id="RHEA-COMP:10463"/>
        <dbReference type="Rhea" id="RHEA-COMP:13936"/>
        <dbReference type="Rhea" id="RHEA-COMP:17355"/>
        <dbReference type="ChEBI" id="CHEBI:15377"/>
        <dbReference type="ChEBI" id="CHEBI:15378"/>
        <dbReference type="ChEBI" id="CHEBI:83062"/>
        <dbReference type="ChEBI" id="CHEBI:138284"/>
        <dbReference type="ChEBI" id="CHEBI:173118"/>
        <dbReference type="EC" id="4.6.1.19"/>
    </reaction>
</comment>
<comment type="subcellular location">
    <subcellularLocation>
        <location>Cytoplasm</location>
    </subcellularLocation>
    <text>Intracellular, but extravacuolar.</text>
</comment>
<comment type="induction">
    <text>By phosphate starvation.</text>
</comment>
<comment type="similarity">
    <text evidence="7">Belongs to the RNase T2 family.</text>
</comment>
<feature type="propeptide" id="PRO_0000030970" evidence="6">
    <location>
        <begin position="1"/>
        <end position="24"/>
    </location>
</feature>
<feature type="chain" id="PRO_0000030971" description="Intracellular ribonuclease LX">
    <location>
        <begin position="25"/>
        <end position="237"/>
    </location>
</feature>
<feature type="active site" description="Proton donor" evidence="3 4">
    <location>
        <position position="63"/>
    </location>
</feature>
<feature type="active site" evidence="1">
    <location>
        <position position="117"/>
    </location>
</feature>
<feature type="active site" description="Proton acceptor" evidence="3 4">
    <location>
        <position position="121"/>
    </location>
</feature>
<feature type="binding site" evidence="2">
    <location>
        <position position="36"/>
    </location>
    <ligand>
        <name>RNA</name>
        <dbReference type="ChEBI" id="CHEBI:33697"/>
    </ligand>
    <ligandPart>
        <name>a 3'-terminal ribonucleotide 3'-phosphate residue</name>
        <dbReference type="ChEBI" id="CHEBI:83062"/>
    </ligandPart>
</feature>
<feature type="binding site" evidence="2">
    <location>
        <position position="63"/>
    </location>
    <ligand>
        <name>RNA</name>
        <dbReference type="ChEBI" id="CHEBI:33697"/>
    </ligand>
    <ligandPart>
        <name>a 3'-terminal ribonucleotide 3'-phosphate residue</name>
        <dbReference type="ChEBI" id="CHEBI:83062"/>
    </ligandPart>
</feature>
<feature type="binding site" evidence="2">
    <location>
        <position position="113"/>
    </location>
    <ligand>
        <name>RNA</name>
        <dbReference type="ChEBI" id="CHEBI:33697"/>
    </ligand>
    <ligandPart>
        <name>a 3'-terminal ribonucleotide 3'-phosphate residue</name>
        <dbReference type="ChEBI" id="CHEBI:83062"/>
    </ligandPart>
</feature>
<feature type="binding site" evidence="2">
    <location>
        <begin position="116"/>
        <end position="117"/>
    </location>
    <ligand>
        <name>RNA</name>
        <dbReference type="ChEBI" id="CHEBI:33697"/>
    </ligand>
    <ligandPart>
        <name>a 3'-terminal ribonucleotide 3'-phosphate residue</name>
        <dbReference type="ChEBI" id="CHEBI:83062"/>
    </ligandPart>
</feature>
<feature type="binding site" evidence="2">
    <location>
        <begin position="120"/>
        <end position="121"/>
    </location>
    <ligand>
        <name>RNA</name>
        <dbReference type="ChEBI" id="CHEBI:33697"/>
    </ligand>
    <ligandPart>
        <name>a 3'-terminal ribonucleotide 3'-phosphate residue</name>
        <dbReference type="ChEBI" id="CHEBI:83062"/>
    </ligandPart>
</feature>
<feature type="disulfide bond" evidence="3">
    <location>
        <begin position="42"/>
        <end position="48"/>
    </location>
</feature>
<feature type="disulfide bond" evidence="1">
    <location>
        <begin position="78"/>
        <end position="124"/>
    </location>
</feature>
<feature type="disulfide bond" evidence="1">
    <location>
        <begin position="183"/>
        <end position="219"/>
    </location>
</feature>
<feature type="disulfide bond" evidence="2">
    <location>
        <begin position="199"/>
        <end position="210"/>
    </location>
</feature>
<protein>
    <recommendedName>
        <fullName>Intracellular ribonuclease LX</fullName>
        <shortName>RNase LX</shortName>
        <ecNumber evidence="5">4.6.1.19</ecNumber>
    </recommendedName>
</protein>
<evidence type="ECO:0000250" key="1">
    <source>
        <dbReference type="UniProtKB" id="P08056"/>
    </source>
</evidence>
<evidence type="ECO:0000250" key="2">
    <source>
        <dbReference type="UniProtKB" id="P23540"/>
    </source>
</evidence>
<evidence type="ECO:0000250" key="3">
    <source>
        <dbReference type="UniProtKB" id="Q7SID5"/>
    </source>
</evidence>
<evidence type="ECO:0000255" key="4">
    <source>
        <dbReference type="PROSITE-ProRule" id="PRU10045"/>
    </source>
</evidence>
<evidence type="ECO:0000255" key="5">
    <source>
        <dbReference type="PROSITE-ProRule" id="PRU10046"/>
    </source>
</evidence>
<evidence type="ECO:0000269" key="6">
    <source>
    </source>
</evidence>
<evidence type="ECO:0000305" key="7"/>
<reference key="1">
    <citation type="journal article" date="1995" name="Plant Mol. Biol.">
        <title>cDNA structure and regulatory properties of a family of starvation-induced ribonucleases from tomato.</title>
        <authorList>
            <person name="Koeck M."/>
            <person name="Loeffler A."/>
            <person name="Abel S."/>
            <person name="Glund K."/>
        </authorList>
    </citation>
    <scope>NUCLEOTIDE SEQUENCE [MRNA]</scope>
    <scope>PARTIAL PROTEIN SEQUENCE</scope>
    <source>
        <strain>cv. Lukullus</strain>
        <tissue>Hypocotyl</tissue>
    </source>
</reference>
<reference key="2">
    <citation type="journal article" date="1993" name="Eur. J. Biochem.">
        <title>Amino acid sequence of an intracellular, phosphate-starvation-induced ribonuclease from cultured tomato (Lycopersicon esculentum) cells.</title>
        <authorList>
            <person name="Loeffler A."/>
            <person name="Glund K."/>
            <person name="Irie M."/>
        </authorList>
    </citation>
    <scope>PROTEIN SEQUENCE OF 25-237</scope>
    <source>
        <strain>cv. Lukullus</strain>
    </source>
</reference>